<feature type="chain" id="PRO_0000164344" description="Protein NrdI">
    <location>
        <begin position="1"/>
        <end position="162"/>
    </location>
</feature>
<organism>
    <name type="scientific">Streptococcus pyogenes serotype M3 (strain ATCC BAA-595 / MGAS315)</name>
    <dbReference type="NCBI Taxonomy" id="198466"/>
    <lineage>
        <taxon>Bacteria</taxon>
        <taxon>Bacillati</taxon>
        <taxon>Bacillota</taxon>
        <taxon>Bacilli</taxon>
        <taxon>Lactobacillales</taxon>
        <taxon>Streptococcaceae</taxon>
        <taxon>Streptococcus</taxon>
    </lineage>
</organism>
<proteinExistence type="inferred from homology"/>
<gene>
    <name evidence="1" type="primary">nrdI</name>
    <name type="ordered locus">SpyM3_0302</name>
</gene>
<sequence length="162" mass="18114">MAELIIVYFSSKSNNTHRFVQKLGLPAQRIPVDNRPLEVSTHYLLIVPTYAAGGSDAKGAVPKQVIRFLNNPNNRKHCKGVISSGNTNFGDTFALAGPIISQKLQVPLLHQFELLGTATDVKKVQAIFARLKHHTHDKQKQTNNLITERTHPCHKPMRHTSH</sequence>
<evidence type="ECO:0000255" key="1">
    <source>
        <dbReference type="HAMAP-Rule" id="MF_00128"/>
    </source>
</evidence>
<accession>P0DC70</accession>
<accession>P65550</accession>
<accession>Q8P296</accession>
<name>NRDI_STRP3</name>
<reference key="1">
    <citation type="journal article" date="2002" name="Proc. Natl. Acad. Sci. U.S.A.">
        <title>Genome sequence of a serotype M3 strain of group A Streptococcus: phage-encoded toxins, the high-virulence phenotype, and clone emergence.</title>
        <authorList>
            <person name="Beres S.B."/>
            <person name="Sylva G.L."/>
            <person name="Barbian K.D."/>
            <person name="Lei B."/>
            <person name="Hoff J.S."/>
            <person name="Mammarella N.D."/>
            <person name="Liu M.-Y."/>
            <person name="Smoot J.C."/>
            <person name="Porcella S.F."/>
            <person name="Parkins L.D."/>
            <person name="Campbell D.S."/>
            <person name="Smith T.M."/>
            <person name="McCormick J.K."/>
            <person name="Leung D.Y.M."/>
            <person name="Schlievert P.M."/>
            <person name="Musser J.M."/>
        </authorList>
    </citation>
    <scope>NUCLEOTIDE SEQUENCE [LARGE SCALE GENOMIC DNA]</scope>
    <source>
        <strain>ATCC BAA-595 / MGAS315</strain>
    </source>
</reference>
<dbReference type="EMBL" id="AE014074">
    <property type="protein sequence ID" value="AAM78909.1"/>
    <property type="molecule type" value="Genomic_DNA"/>
</dbReference>
<dbReference type="RefSeq" id="WP_002990870.1">
    <property type="nucleotide sequence ID" value="NC_004070.1"/>
</dbReference>
<dbReference type="SMR" id="P0DC70"/>
<dbReference type="GeneID" id="69901324"/>
<dbReference type="KEGG" id="spg:SpyM3_0302"/>
<dbReference type="HOGENOM" id="CLU_114845_0_0_9"/>
<dbReference type="Proteomes" id="UP000000564">
    <property type="component" value="Chromosome"/>
</dbReference>
<dbReference type="GO" id="GO:0010181">
    <property type="term" value="F:FMN binding"/>
    <property type="evidence" value="ECO:0007669"/>
    <property type="project" value="InterPro"/>
</dbReference>
<dbReference type="GO" id="GO:0036211">
    <property type="term" value="P:protein modification process"/>
    <property type="evidence" value="ECO:0007669"/>
    <property type="project" value="InterPro"/>
</dbReference>
<dbReference type="Gene3D" id="3.40.50.360">
    <property type="match status" value="1"/>
</dbReference>
<dbReference type="HAMAP" id="MF_00128">
    <property type="entry name" value="NrdI"/>
    <property type="match status" value="1"/>
</dbReference>
<dbReference type="InterPro" id="IPR029039">
    <property type="entry name" value="Flavoprotein-like_sf"/>
</dbReference>
<dbReference type="InterPro" id="IPR020852">
    <property type="entry name" value="RNR_Ib_NrdI_bac"/>
</dbReference>
<dbReference type="InterPro" id="IPR004465">
    <property type="entry name" value="RNR_NrdI"/>
</dbReference>
<dbReference type="NCBIfam" id="TIGR00333">
    <property type="entry name" value="nrdI"/>
    <property type="match status" value="1"/>
</dbReference>
<dbReference type="PANTHER" id="PTHR37297">
    <property type="entry name" value="PROTEIN NRDI"/>
    <property type="match status" value="1"/>
</dbReference>
<dbReference type="PANTHER" id="PTHR37297:SF1">
    <property type="entry name" value="PROTEIN NRDI"/>
    <property type="match status" value="1"/>
</dbReference>
<dbReference type="Pfam" id="PF07972">
    <property type="entry name" value="Flavodoxin_NdrI"/>
    <property type="match status" value="1"/>
</dbReference>
<dbReference type="PIRSF" id="PIRSF005087">
    <property type="entry name" value="NrdI"/>
    <property type="match status" value="1"/>
</dbReference>
<dbReference type="SUPFAM" id="SSF52218">
    <property type="entry name" value="Flavoproteins"/>
    <property type="match status" value="1"/>
</dbReference>
<protein>
    <recommendedName>
        <fullName evidence="1">Protein NrdI</fullName>
    </recommendedName>
</protein>
<comment type="function">
    <text evidence="1">Probably involved in ribonucleotide reductase function.</text>
</comment>
<comment type="similarity">
    <text evidence="1">Belongs to the NrdI family.</text>
</comment>